<keyword id="KW-1015">Disulfide bond</keyword>
<keyword id="KW-0960">Knottin</keyword>
<keyword id="KW-0964">Secreted</keyword>
<keyword id="KW-0732">Signal</keyword>
<keyword id="KW-0800">Toxin</keyword>
<reference key="1">
    <citation type="journal article" date="2010" name="Zoology">
        <title>Transcriptome analysis of the venom glands of the Chinese wolf spider Lycosa singoriensis.</title>
        <authorList>
            <person name="Zhang Y."/>
            <person name="Chen J."/>
            <person name="Tang X."/>
            <person name="Wang F."/>
            <person name="Jiang L."/>
            <person name="Xiong X."/>
            <person name="Wang M."/>
            <person name="Rong M."/>
            <person name="Liu Z."/>
            <person name="Liang S."/>
        </authorList>
    </citation>
    <scope>NUCLEOTIDE SEQUENCE [LARGE SCALE MRNA]</scope>
    <source>
        <tissue>Venom gland</tissue>
    </source>
</reference>
<comment type="subcellular location">
    <subcellularLocation>
        <location evidence="1">Secreted</location>
    </subcellularLocation>
</comment>
<comment type="tissue specificity">
    <text>Expressed by the venom gland.</text>
</comment>
<comment type="domain">
    <text evidence="1">The presence of a 'disulfide through disulfide knot' structurally defines this protein as a knottin.</text>
</comment>
<comment type="similarity">
    <text evidence="3">Belongs to the neurotoxin 19 (CSTX) family. 04 (U1-Lctx) subfamily.</text>
</comment>
<accession>B6DCL6</accession>
<organism>
    <name type="scientific">Lycosa singoriensis</name>
    <name type="common">Wolf spider</name>
    <name type="synonym">Aranea singoriensis</name>
    <dbReference type="NCBI Taxonomy" id="434756"/>
    <lineage>
        <taxon>Eukaryota</taxon>
        <taxon>Metazoa</taxon>
        <taxon>Ecdysozoa</taxon>
        <taxon>Arthropoda</taxon>
        <taxon>Chelicerata</taxon>
        <taxon>Arachnida</taxon>
        <taxon>Araneae</taxon>
        <taxon>Araneomorphae</taxon>
        <taxon>Entelegynae</taxon>
        <taxon>Lycosoidea</taxon>
        <taxon>Lycosidae</taxon>
        <taxon>Lycosa</taxon>
    </lineage>
</organism>
<protein>
    <recommendedName>
        <fullName>U1-lycotoxin-Ls1m</fullName>
    </recommendedName>
    <alternativeName>
        <fullName>Toxin-like structure LSTX-A27</fullName>
    </alternativeName>
</protein>
<sequence length="107" mass="11822">MMKVLVVVALLVTLISYSSSEGIDDLEADELLSLMANEQTRKECIPKHHECTSNKHGCCRGNFFKCKCQCTTVVTQDGEQTERCFCGTPPHHKAAELVVGFGKKIFG</sequence>
<dbReference type="EMBL" id="EU925950">
    <property type="protein sequence ID" value="ACI41282.1"/>
    <property type="molecule type" value="mRNA"/>
</dbReference>
<dbReference type="EMBL" id="FM863954">
    <property type="protein sequence ID" value="CAS03552.1"/>
    <property type="molecule type" value="mRNA"/>
</dbReference>
<dbReference type="SMR" id="B6DCL6"/>
<dbReference type="ArachnoServer" id="AS000899">
    <property type="toxin name" value="U1-lycotoxin-Ls1m"/>
</dbReference>
<dbReference type="GO" id="GO:0005576">
    <property type="term" value="C:extracellular region"/>
    <property type="evidence" value="ECO:0007669"/>
    <property type="project" value="UniProtKB-SubCell"/>
</dbReference>
<dbReference type="GO" id="GO:0090729">
    <property type="term" value="F:toxin activity"/>
    <property type="evidence" value="ECO:0007669"/>
    <property type="project" value="UniProtKB-KW"/>
</dbReference>
<dbReference type="InterPro" id="IPR019553">
    <property type="entry name" value="Spider_toxin_CSTX_knottin"/>
</dbReference>
<dbReference type="Pfam" id="PF10530">
    <property type="entry name" value="Toxin_35"/>
    <property type="match status" value="1"/>
</dbReference>
<feature type="signal peptide" evidence="2">
    <location>
        <begin position="1"/>
        <end position="20"/>
    </location>
</feature>
<feature type="propeptide" id="PRO_0000401549" evidence="1">
    <location>
        <begin position="21"/>
        <end position="41"/>
    </location>
</feature>
<feature type="chain" id="PRO_0000401550" description="U1-lycotoxin-Ls1m">
    <location>
        <begin position="42"/>
        <end position="107"/>
    </location>
</feature>
<feature type="disulfide bond" evidence="1">
    <location>
        <begin position="44"/>
        <end position="59"/>
    </location>
</feature>
<feature type="disulfide bond" evidence="1">
    <location>
        <begin position="51"/>
        <end position="68"/>
    </location>
</feature>
<feature type="disulfide bond" evidence="1">
    <location>
        <begin position="58"/>
        <end position="86"/>
    </location>
</feature>
<feature type="disulfide bond" evidence="1">
    <location>
        <begin position="70"/>
        <end position="84"/>
    </location>
</feature>
<proteinExistence type="evidence at transcript level"/>
<name>TX127_LYCSI</name>
<evidence type="ECO:0000250" key="1"/>
<evidence type="ECO:0000255" key="2"/>
<evidence type="ECO:0000305" key="3"/>